<name>HEMH_SALTI</name>
<reference key="1">
    <citation type="journal article" date="2001" name="Nature">
        <title>Complete genome sequence of a multiple drug resistant Salmonella enterica serovar Typhi CT18.</title>
        <authorList>
            <person name="Parkhill J."/>
            <person name="Dougan G."/>
            <person name="James K.D."/>
            <person name="Thomson N.R."/>
            <person name="Pickard D."/>
            <person name="Wain J."/>
            <person name="Churcher C.M."/>
            <person name="Mungall K.L."/>
            <person name="Bentley S.D."/>
            <person name="Holden M.T.G."/>
            <person name="Sebaihia M."/>
            <person name="Baker S."/>
            <person name="Basham D."/>
            <person name="Brooks K."/>
            <person name="Chillingworth T."/>
            <person name="Connerton P."/>
            <person name="Cronin A."/>
            <person name="Davis P."/>
            <person name="Davies R.M."/>
            <person name="Dowd L."/>
            <person name="White N."/>
            <person name="Farrar J."/>
            <person name="Feltwell T."/>
            <person name="Hamlin N."/>
            <person name="Haque A."/>
            <person name="Hien T.T."/>
            <person name="Holroyd S."/>
            <person name="Jagels K."/>
            <person name="Krogh A."/>
            <person name="Larsen T.S."/>
            <person name="Leather S."/>
            <person name="Moule S."/>
            <person name="O'Gaora P."/>
            <person name="Parry C."/>
            <person name="Quail M.A."/>
            <person name="Rutherford K.M."/>
            <person name="Simmonds M."/>
            <person name="Skelton J."/>
            <person name="Stevens K."/>
            <person name="Whitehead S."/>
            <person name="Barrell B.G."/>
        </authorList>
    </citation>
    <scope>NUCLEOTIDE SEQUENCE [LARGE SCALE GENOMIC DNA]</scope>
    <source>
        <strain>CT18</strain>
    </source>
</reference>
<reference key="2">
    <citation type="journal article" date="2003" name="J. Bacteriol.">
        <title>Comparative genomics of Salmonella enterica serovar Typhi strains Ty2 and CT18.</title>
        <authorList>
            <person name="Deng W."/>
            <person name="Liou S.-R."/>
            <person name="Plunkett G. III"/>
            <person name="Mayhew G.F."/>
            <person name="Rose D.J."/>
            <person name="Burland V."/>
            <person name="Kodoyianni V."/>
            <person name="Schwartz D.C."/>
            <person name="Blattner F.R."/>
        </authorList>
    </citation>
    <scope>NUCLEOTIDE SEQUENCE [LARGE SCALE GENOMIC DNA]</scope>
    <source>
        <strain>ATCC 700931 / Ty2</strain>
    </source>
</reference>
<protein>
    <recommendedName>
        <fullName evidence="1">Ferrochelatase</fullName>
        <ecNumber evidence="1">4.98.1.1</ecNumber>
    </recommendedName>
    <alternativeName>
        <fullName evidence="1">Heme synthase</fullName>
    </alternativeName>
    <alternativeName>
        <fullName evidence="1">Protoheme ferro-lyase</fullName>
    </alternativeName>
</protein>
<evidence type="ECO:0000255" key="1">
    <source>
        <dbReference type="HAMAP-Rule" id="MF_00323"/>
    </source>
</evidence>
<proteinExistence type="inferred from homology"/>
<gene>
    <name evidence="1" type="primary">hemH</name>
    <name type="ordered locus">STY0533</name>
    <name type="ordered locus">t2371</name>
</gene>
<dbReference type="EC" id="4.98.1.1" evidence="1"/>
<dbReference type="EMBL" id="AL513382">
    <property type="protein sequence ID" value="CAD04974.1"/>
    <property type="molecule type" value="Genomic_DNA"/>
</dbReference>
<dbReference type="EMBL" id="AE014613">
    <property type="protein sequence ID" value="AAO69962.1"/>
    <property type="molecule type" value="Genomic_DNA"/>
</dbReference>
<dbReference type="RefSeq" id="NP_455085.1">
    <property type="nucleotide sequence ID" value="NC_003198.1"/>
</dbReference>
<dbReference type="RefSeq" id="WP_001250076.1">
    <property type="nucleotide sequence ID" value="NZ_WSUR01000008.1"/>
</dbReference>
<dbReference type="SMR" id="Q8Z8T2"/>
<dbReference type="STRING" id="220341.gene:17584554"/>
<dbReference type="KEGG" id="stt:t2371"/>
<dbReference type="KEGG" id="sty:STY0533"/>
<dbReference type="PATRIC" id="fig|220341.7.peg.536"/>
<dbReference type="eggNOG" id="COG0276">
    <property type="taxonomic scope" value="Bacteria"/>
</dbReference>
<dbReference type="HOGENOM" id="CLU_018884_0_0_6"/>
<dbReference type="OMA" id="DPYHCEC"/>
<dbReference type="OrthoDB" id="9809741at2"/>
<dbReference type="UniPathway" id="UPA00252">
    <property type="reaction ID" value="UER00325"/>
</dbReference>
<dbReference type="Proteomes" id="UP000000541">
    <property type="component" value="Chromosome"/>
</dbReference>
<dbReference type="Proteomes" id="UP000002670">
    <property type="component" value="Chromosome"/>
</dbReference>
<dbReference type="GO" id="GO:0005737">
    <property type="term" value="C:cytoplasm"/>
    <property type="evidence" value="ECO:0007669"/>
    <property type="project" value="UniProtKB-SubCell"/>
</dbReference>
<dbReference type="GO" id="GO:0004325">
    <property type="term" value="F:ferrochelatase activity"/>
    <property type="evidence" value="ECO:0007669"/>
    <property type="project" value="UniProtKB-UniRule"/>
</dbReference>
<dbReference type="GO" id="GO:0046872">
    <property type="term" value="F:metal ion binding"/>
    <property type="evidence" value="ECO:0007669"/>
    <property type="project" value="UniProtKB-KW"/>
</dbReference>
<dbReference type="GO" id="GO:0006783">
    <property type="term" value="P:heme biosynthetic process"/>
    <property type="evidence" value="ECO:0007669"/>
    <property type="project" value="UniProtKB-UniRule"/>
</dbReference>
<dbReference type="CDD" id="cd00419">
    <property type="entry name" value="Ferrochelatase_C"/>
    <property type="match status" value="1"/>
</dbReference>
<dbReference type="CDD" id="cd03411">
    <property type="entry name" value="Ferrochelatase_N"/>
    <property type="match status" value="1"/>
</dbReference>
<dbReference type="FunFam" id="3.40.50.1400:FF:000004">
    <property type="entry name" value="Ferrochelatase"/>
    <property type="match status" value="1"/>
</dbReference>
<dbReference type="Gene3D" id="3.40.50.1400">
    <property type="match status" value="2"/>
</dbReference>
<dbReference type="HAMAP" id="MF_00323">
    <property type="entry name" value="Ferrochelatase"/>
    <property type="match status" value="1"/>
</dbReference>
<dbReference type="InterPro" id="IPR001015">
    <property type="entry name" value="Ferrochelatase"/>
</dbReference>
<dbReference type="InterPro" id="IPR019772">
    <property type="entry name" value="Ferrochelatase_AS"/>
</dbReference>
<dbReference type="InterPro" id="IPR033644">
    <property type="entry name" value="Ferrochelatase_C"/>
</dbReference>
<dbReference type="InterPro" id="IPR033659">
    <property type="entry name" value="Ferrochelatase_N"/>
</dbReference>
<dbReference type="NCBIfam" id="TIGR00109">
    <property type="entry name" value="hemH"/>
    <property type="match status" value="1"/>
</dbReference>
<dbReference type="PANTHER" id="PTHR11108">
    <property type="entry name" value="FERROCHELATASE"/>
    <property type="match status" value="1"/>
</dbReference>
<dbReference type="PANTHER" id="PTHR11108:SF1">
    <property type="entry name" value="FERROCHELATASE, MITOCHONDRIAL"/>
    <property type="match status" value="1"/>
</dbReference>
<dbReference type="Pfam" id="PF00762">
    <property type="entry name" value="Ferrochelatase"/>
    <property type="match status" value="1"/>
</dbReference>
<dbReference type="SUPFAM" id="SSF53800">
    <property type="entry name" value="Chelatase"/>
    <property type="match status" value="1"/>
</dbReference>
<dbReference type="PROSITE" id="PS00534">
    <property type="entry name" value="FERROCHELATASE"/>
    <property type="match status" value="1"/>
</dbReference>
<accession>Q8Z8T2</accession>
<organism>
    <name type="scientific">Salmonella typhi</name>
    <dbReference type="NCBI Taxonomy" id="90370"/>
    <lineage>
        <taxon>Bacteria</taxon>
        <taxon>Pseudomonadati</taxon>
        <taxon>Pseudomonadota</taxon>
        <taxon>Gammaproteobacteria</taxon>
        <taxon>Enterobacterales</taxon>
        <taxon>Enterobacteriaceae</taxon>
        <taxon>Salmonella</taxon>
    </lineage>
</organism>
<comment type="function">
    <text evidence="1">Catalyzes the ferrous insertion into protoporphyrin IX.</text>
</comment>
<comment type="catalytic activity">
    <reaction evidence="1">
        <text>heme b + 2 H(+) = protoporphyrin IX + Fe(2+)</text>
        <dbReference type="Rhea" id="RHEA:22584"/>
        <dbReference type="ChEBI" id="CHEBI:15378"/>
        <dbReference type="ChEBI" id="CHEBI:29033"/>
        <dbReference type="ChEBI" id="CHEBI:57306"/>
        <dbReference type="ChEBI" id="CHEBI:60344"/>
        <dbReference type="EC" id="4.98.1.1"/>
    </reaction>
</comment>
<comment type="pathway">
    <text evidence="1">Porphyrin-containing compound metabolism; protoheme biosynthesis; protoheme from protoporphyrin-IX: step 1/1.</text>
</comment>
<comment type="subunit">
    <text evidence="1">Monomer.</text>
</comment>
<comment type="subcellular location">
    <subcellularLocation>
        <location evidence="1">Cytoplasm</location>
    </subcellularLocation>
</comment>
<comment type="similarity">
    <text evidence="1">Belongs to the ferrochelatase family.</text>
</comment>
<keyword id="KW-0963">Cytoplasm</keyword>
<keyword id="KW-0350">Heme biosynthesis</keyword>
<keyword id="KW-0408">Iron</keyword>
<keyword id="KW-0456">Lyase</keyword>
<keyword id="KW-0479">Metal-binding</keyword>
<keyword id="KW-0627">Porphyrin biosynthesis</keyword>
<sequence length="320" mass="35941">MRQTKTGILLANLGTPDAPTPEAVKRYLKQFLSDRRVVDTPRLLWWPLLRGVILPLRSPRVAKLYQSIWMDGGSPLMVYSREQQQALAARLPDTPVALGMSYGSPSLESAVDELLASDVDHIVVLPLYPQYSCSTVGAVWDELGRILARKRRIPGISFIRDYADDGAYIDALAKSARESFARHGEPDLLLLSYHGIPQRYADEGDDYPQRCRDTTRELVSALGLPPEKVMMTFQSRFGREPWLTPYTDETLKMLGEKGTGHIQVMCPGFAADCLETLEEIAEQNREIFLEAGGKKYAYIQALNATPEHIDMILKLTAPYR</sequence>
<feature type="chain" id="PRO_0000175196" description="Ferrochelatase">
    <location>
        <begin position="1"/>
        <end position="320"/>
    </location>
</feature>
<feature type="binding site" evidence="1">
    <location>
        <position position="194"/>
    </location>
    <ligand>
        <name>Fe cation</name>
        <dbReference type="ChEBI" id="CHEBI:24875"/>
    </ligand>
</feature>
<feature type="binding site" evidence="1">
    <location>
        <position position="275"/>
    </location>
    <ligand>
        <name>Fe cation</name>
        <dbReference type="ChEBI" id="CHEBI:24875"/>
    </ligand>
</feature>